<accession>Q0AWJ4</accession>
<sequence>MFVDQARIFVKGGDGGNGIVAFRREKYVPMGGPSGGDGGRGANVILVADEGLKTLMDFKYRRHFKAERGAHGQGKNMHGAWGQDLRVKVPVGTVIKDDESGEVLADLLLQGQEAVVAKGGRGGRGNARFSSAINKAPSFSENGEPGEEKWIRLELKLLADVGLVGFPNAGKSTLISRVSAARPKIADYPFTTLVPNLGVVMTKERDTFVLADIPGLIEGAHQGLGLGHEFLRHIERTRVILFILDAAQTEGRDVVEDYRILYRELELHNPDLLKRPQLIVANKMDIPDARDNARRLESELGKTVHCISAVTGQGVEELMGKTYALLQAAPQEIPSGEEPVVRRFEEELPFKIDKVDGVFEVSGPRIEKLVVMTNFNSDEGLQRFQRTVIKMGLEEALKEHGIKEGDSVRIKDFEFEFTE</sequence>
<name>OBG_SYNWW</name>
<organism>
    <name type="scientific">Syntrophomonas wolfei subsp. wolfei (strain DSM 2245B / Goettingen)</name>
    <dbReference type="NCBI Taxonomy" id="335541"/>
    <lineage>
        <taxon>Bacteria</taxon>
        <taxon>Bacillati</taxon>
        <taxon>Bacillota</taxon>
        <taxon>Clostridia</taxon>
        <taxon>Eubacteriales</taxon>
        <taxon>Syntrophomonadaceae</taxon>
        <taxon>Syntrophomonas</taxon>
    </lineage>
</organism>
<proteinExistence type="inferred from homology"/>
<reference key="1">
    <citation type="journal article" date="2010" name="Environ. Microbiol.">
        <title>The genome of Syntrophomonas wolfei: new insights into syntrophic metabolism and biohydrogen production.</title>
        <authorList>
            <person name="Sieber J.R."/>
            <person name="Sims D.R."/>
            <person name="Han C."/>
            <person name="Kim E."/>
            <person name="Lykidis A."/>
            <person name="Lapidus A.L."/>
            <person name="McDonnald E."/>
            <person name="Rohlin L."/>
            <person name="Culley D.E."/>
            <person name="Gunsalus R."/>
            <person name="McInerney M.J."/>
        </authorList>
    </citation>
    <scope>NUCLEOTIDE SEQUENCE [LARGE SCALE GENOMIC DNA]</scope>
    <source>
        <strain>DSM 2245B / Goettingen</strain>
    </source>
</reference>
<gene>
    <name evidence="1" type="primary">obg</name>
    <name type="ordered locus">Swol_1609</name>
</gene>
<keyword id="KW-0963">Cytoplasm</keyword>
<keyword id="KW-0342">GTP-binding</keyword>
<keyword id="KW-0378">Hydrolase</keyword>
<keyword id="KW-0460">Magnesium</keyword>
<keyword id="KW-0479">Metal-binding</keyword>
<keyword id="KW-0547">Nucleotide-binding</keyword>
<keyword id="KW-1185">Reference proteome</keyword>
<comment type="function">
    <text evidence="1">An essential GTPase which binds GTP, GDP and possibly (p)ppGpp with moderate affinity, with high nucleotide exchange rates and a fairly low GTP hydrolysis rate. Plays a role in control of the cell cycle, stress response, ribosome biogenesis and in those bacteria that undergo differentiation, in morphogenesis control.</text>
</comment>
<comment type="cofactor">
    <cofactor evidence="1">
        <name>Mg(2+)</name>
        <dbReference type="ChEBI" id="CHEBI:18420"/>
    </cofactor>
</comment>
<comment type="subunit">
    <text evidence="1">Monomer.</text>
</comment>
<comment type="subcellular location">
    <subcellularLocation>
        <location evidence="1">Cytoplasm</location>
    </subcellularLocation>
</comment>
<comment type="similarity">
    <text evidence="1">Belongs to the TRAFAC class OBG-HflX-like GTPase superfamily. OBG GTPase family.</text>
</comment>
<protein>
    <recommendedName>
        <fullName evidence="1">GTPase Obg</fullName>
        <ecNumber evidence="1">3.6.5.-</ecNumber>
    </recommendedName>
    <alternativeName>
        <fullName evidence="1">GTP-binding protein Obg</fullName>
    </alternativeName>
</protein>
<evidence type="ECO:0000255" key="1">
    <source>
        <dbReference type="HAMAP-Rule" id="MF_01454"/>
    </source>
</evidence>
<evidence type="ECO:0000255" key="2">
    <source>
        <dbReference type="PROSITE-ProRule" id="PRU01229"/>
    </source>
</evidence>
<evidence type="ECO:0000255" key="3">
    <source>
        <dbReference type="PROSITE-ProRule" id="PRU01231"/>
    </source>
</evidence>
<feature type="chain" id="PRO_0000386344" description="GTPase Obg">
    <location>
        <begin position="1"/>
        <end position="419"/>
    </location>
</feature>
<feature type="domain" description="Obg" evidence="3">
    <location>
        <begin position="1"/>
        <end position="158"/>
    </location>
</feature>
<feature type="domain" description="OBG-type G" evidence="1">
    <location>
        <begin position="159"/>
        <end position="327"/>
    </location>
</feature>
<feature type="domain" description="OCT" evidence="2">
    <location>
        <begin position="342"/>
        <end position="419"/>
    </location>
</feature>
<feature type="binding site" evidence="1">
    <location>
        <begin position="165"/>
        <end position="172"/>
    </location>
    <ligand>
        <name>GTP</name>
        <dbReference type="ChEBI" id="CHEBI:37565"/>
    </ligand>
</feature>
<feature type="binding site" evidence="1">
    <location>
        <position position="172"/>
    </location>
    <ligand>
        <name>Mg(2+)</name>
        <dbReference type="ChEBI" id="CHEBI:18420"/>
    </ligand>
</feature>
<feature type="binding site" evidence="1">
    <location>
        <begin position="190"/>
        <end position="194"/>
    </location>
    <ligand>
        <name>GTP</name>
        <dbReference type="ChEBI" id="CHEBI:37565"/>
    </ligand>
</feature>
<feature type="binding site" evidence="1">
    <location>
        <position position="192"/>
    </location>
    <ligand>
        <name>Mg(2+)</name>
        <dbReference type="ChEBI" id="CHEBI:18420"/>
    </ligand>
</feature>
<feature type="binding site" evidence="1">
    <location>
        <begin position="212"/>
        <end position="215"/>
    </location>
    <ligand>
        <name>GTP</name>
        <dbReference type="ChEBI" id="CHEBI:37565"/>
    </ligand>
</feature>
<feature type="binding site" evidence="1">
    <location>
        <begin position="282"/>
        <end position="285"/>
    </location>
    <ligand>
        <name>GTP</name>
        <dbReference type="ChEBI" id="CHEBI:37565"/>
    </ligand>
</feature>
<feature type="binding site" evidence="1">
    <location>
        <begin position="308"/>
        <end position="310"/>
    </location>
    <ligand>
        <name>GTP</name>
        <dbReference type="ChEBI" id="CHEBI:37565"/>
    </ligand>
</feature>
<dbReference type="EC" id="3.6.5.-" evidence="1"/>
<dbReference type="EMBL" id="CP000448">
    <property type="protein sequence ID" value="ABI68910.1"/>
    <property type="molecule type" value="Genomic_DNA"/>
</dbReference>
<dbReference type="RefSeq" id="WP_011641008.1">
    <property type="nucleotide sequence ID" value="NC_008346.1"/>
</dbReference>
<dbReference type="SMR" id="Q0AWJ4"/>
<dbReference type="STRING" id="335541.Swol_1609"/>
<dbReference type="KEGG" id="swo:Swol_1609"/>
<dbReference type="eggNOG" id="COG0536">
    <property type="taxonomic scope" value="Bacteria"/>
</dbReference>
<dbReference type="HOGENOM" id="CLU_011747_2_1_9"/>
<dbReference type="OrthoDB" id="9807318at2"/>
<dbReference type="Proteomes" id="UP000001968">
    <property type="component" value="Chromosome"/>
</dbReference>
<dbReference type="GO" id="GO:0005737">
    <property type="term" value="C:cytoplasm"/>
    <property type="evidence" value="ECO:0007669"/>
    <property type="project" value="UniProtKB-SubCell"/>
</dbReference>
<dbReference type="GO" id="GO:0005525">
    <property type="term" value="F:GTP binding"/>
    <property type="evidence" value="ECO:0007669"/>
    <property type="project" value="UniProtKB-UniRule"/>
</dbReference>
<dbReference type="GO" id="GO:0003924">
    <property type="term" value="F:GTPase activity"/>
    <property type="evidence" value="ECO:0007669"/>
    <property type="project" value="UniProtKB-UniRule"/>
</dbReference>
<dbReference type="GO" id="GO:0000287">
    <property type="term" value="F:magnesium ion binding"/>
    <property type="evidence" value="ECO:0007669"/>
    <property type="project" value="InterPro"/>
</dbReference>
<dbReference type="GO" id="GO:0042254">
    <property type="term" value="P:ribosome biogenesis"/>
    <property type="evidence" value="ECO:0007669"/>
    <property type="project" value="UniProtKB-UniRule"/>
</dbReference>
<dbReference type="CDD" id="cd01898">
    <property type="entry name" value="Obg"/>
    <property type="match status" value="1"/>
</dbReference>
<dbReference type="FunFam" id="2.70.210.12:FF:000001">
    <property type="entry name" value="GTPase Obg"/>
    <property type="match status" value="1"/>
</dbReference>
<dbReference type="Gene3D" id="3.30.300.350">
    <property type="entry name" value="GTP-binding protein OBG, C-terminal domain"/>
    <property type="match status" value="1"/>
</dbReference>
<dbReference type="Gene3D" id="2.70.210.12">
    <property type="entry name" value="GTP1/OBG domain"/>
    <property type="match status" value="1"/>
</dbReference>
<dbReference type="Gene3D" id="3.40.50.300">
    <property type="entry name" value="P-loop containing nucleotide triphosphate hydrolases"/>
    <property type="match status" value="1"/>
</dbReference>
<dbReference type="HAMAP" id="MF_01454">
    <property type="entry name" value="GTPase_Obg"/>
    <property type="match status" value="1"/>
</dbReference>
<dbReference type="InterPro" id="IPR031167">
    <property type="entry name" value="G_OBG"/>
</dbReference>
<dbReference type="InterPro" id="IPR006073">
    <property type="entry name" value="GTP-bd"/>
</dbReference>
<dbReference type="InterPro" id="IPR014100">
    <property type="entry name" value="GTP-bd_Obg/CgtA"/>
</dbReference>
<dbReference type="InterPro" id="IPR036346">
    <property type="entry name" value="GTP-bd_prot_GTP1/OBG_C_sf"/>
</dbReference>
<dbReference type="InterPro" id="IPR006074">
    <property type="entry name" value="GTP1-OBG_CS"/>
</dbReference>
<dbReference type="InterPro" id="IPR006169">
    <property type="entry name" value="GTP1_OBG_dom"/>
</dbReference>
<dbReference type="InterPro" id="IPR036726">
    <property type="entry name" value="GTP1_OBG_dom_sf"/>
</dbReference>
<dbReference type="InterPro" id="IPR045086">
    <property type="entry name" value="OBG_GTPase"/>
</dbReference>
<dbReference type="InterPro" id="IPR015349">
    <property type="entry name" value="OCT_dom"/>
</dbReference>
<dbReference type="InterPro" id="IPR027417">
    <property type="entry name" value="P-loop_NTPase"/>
</dbReference>
<dbReference type="NCBIfam" id="TIGR02729">
    <property type="entry name" value="Obg_CgtA"/>
    <property type="match status" value="1"/>
</dbReference>
<dbReference type="NCBIfam" id="TIGR03595">
    <property type="entry name" value="Obg_CgtA_exten"/>
    <property type="match status" value="1"/>
</dbReference>
<dbReference type="NCBIfam" id="NF008954">
    <property type="entry name" value="PRK12296.1"/>
    <property type="match status" value="1"/>
</dbReference>
<dbReference type="NCBIfam" id="NF008955">
    <property type="entry name" value="PRK12297.1"/>
    <property type="match status" value="1"/>
</dbReference>
<dbReference type="NCBIfam" id="NF008956">
    <property type="entry name" value="PRK12299.1"/>
    <property type="match status" value="1"/>
</dbReference>
<dbReference type="PANTHER" id="PTHR11702">
    <property type="entry name" value="DEVELOPMENTALLY REGULATED GTP-BINDING PROTEIN-RELATED"/>
    <property type="match status" value="1"/>
</dbReference>
<dbReference type="PANTHER" id="PTHR11702:SF31">
    <property type="entry name" value="MITOCHONDRIAL RIBOSOME-ASSOCIATED GTPASE 2"/>
    <property type="match status" value="1"/>
</dbReference>
<dbReference type="Pfam" id="PF09269">
    <property type="entry name" value="DUF1967"/>
    <property type="match status" value="1"/>
</dbReference>
<dbReference type="Pfam" id="PF01018">
    <property type="entry name" value="GTP1_OBG"/>
    <property type="match status" value="1"/>
</dbReference>
<dbReference type="Pfam" id="PF01926">
    <property type="entry name" value="MMR_HSR1"/>
    <property type="match status" value="1"/>
</dbReference>
<dbReference type="PRINTS" id="PR00326">
    <property type="entry name" value="GTP1OBG"/>
</dbReference>
<dbReference type="SUPFAM" id="SSF102741">
    <property type="entry name" value="Obg GTP-binding protein C-terminal domain"/>
    <property type="match status" value="1"/>
</dbReference>
<dbReference type="SUPFAM" id="SSF82051">
    <property type="entry name" value="Obg GTP-binding protein N-terminal domain"/>
    <property type="match status" value="1"/>
</dbReference>
<dbReference type="SUPFAM" id="SSF52540">
    <property type="entry name" value="P-loop containing nucleoside triphosphate hydrolases"/>
    <property type="match status" value="1"/>
</dbReference>
<dbReference type="PROSITE" id="PS51710">
    <property type="entry name" value="G_OBG"/>
    <property type="match status" value="1"/>
</dbReference>
<dbReference type="PROSITE" id="PS00905">
    <property type="entry name" value="GTP1_OBG"/>
    <property type="match status" value="1"/>
</dbReference>
<dbReference type="PROSITE" id="PS51883">
    <property type="entry name" value="OBG"/>
    <property type="match status" value="1"/>
</dbReference>
<dbReference type="PROSITE" id="PS51881">
    <property type="entry name" value="OCT"/>
    <property type="match status" value="1"/>
</dbReference>